<comment type="function">
    <text>This protein promotes the GTP-dependent binding of aminoacyl-tRNA to the A-site of ribosomes during protein biosynthesis.</text>
</comment>
<comment type="subcellular location">
    <subcellularLocation>
        <location>Cytoplasm</location>
    </subcellularLocation>
</comment>
<comment type="similarity">
    <text evidence="2">Belongs to the TRAFAC class translation factor GTPase superfamily. Classic translation factor GTPase family. EF-Tu/EF-1A subfamily.</text>
</comment>
<sequence length="442" mass="48537">MGKEKEHLNLVVIGHVDSGKSTTTGHLIYKLGGIDARTIEKFEKESAEMGKASFKYAWVLDKLKAERERGITIDIALWKFETENRHYTIIDAPGHRDFIKNMITGTSQADAAILIIASGTGEFEAGISKEGQTREHALLAYTMGVKQMVVAMNKMDSTEPPYSEDRYEEIKKEVSTFLAKVGYKPAKMNFVPISGFQGDNIQENSTNMPWYKGPTLCAALDSFKIPKRPIAKPLRLPLQDVYKIGGIGTVPVGRVETGVLKAGMVITFAPKGCSAECKSVEMHHEEVPEAAPGNNVGFNVKGLSVKDIKRGFVASDSKNDPATDTESFVSHTIVMNHPGEIKAGYTPVIDCHTAHIACKFEELLTKADKRSGKMTEENPKFLKAGDAGLIRLSPSKPLCVETFATYAPLGRFAVRDMRQTVAVGVIQEIKKKATEDKKGKKK</sequence>
<accession>Q27139</accession>
<reference key="1">
    <citation type="journal article" date="1996" name="Gene">
        <title>Two different macronuclear EF-1 alpha-encoding genes of the ciliate Euplotes crassus are very dissimilar in their sequences, copy numbers and transcriptional activities.</title>
        <authorList>
            <person name="Bergemann J."/>
            <person name="Florian V."/>
            <person name="Kremser T."/>
            <person name="Klein A."/>
        </authorList>
    </citation>
    <scope>NUCLEOTIDE SEQUENCE [GENOMIC DNA]</scope>
    <source>
        <strain>POR3</strain>
    </source>
</reference>
<keyword id="KW-0963">Cytoplasm</keyword>
<keyword id="KW-0251">Elongation factor</keyword>
<keyword id="KW-0342">GTP-binding</keyword>
<keyword id="KW-0547">Nucleotide-binding</keyword>
<keyword id="KW-0648">Protein biosynthesis</keyword>
<protein>
    <recommendedName>
        <fullName>Elongation factor 1-alpha 1</fullName>
        <shortName>EF-1-alpha-1</shortName>
    </recommendedName>
</protein>
<evidence type="ECO:0000250" key="1"/>
<evidence type="ECO:0000305" key="2"/>
<dbReference type="EMBL" id="U26260">
    <property type="protein sequence ID" value="AAB04943.1"/>
    <property type="molecule type" value="Genomic_DNA"/>
</dbReference>
<dbReference type="SMR" id="Q27139"/>
<dbReference type="GO" id="GO:0005737">
    <property type="term" value="C:cytoplasm"/>
    <property type="evidence" value="ECO:0007669"/>
    <property type="project" value="UniProtKB-SubCell"/>
</dbReference>
<dbReference type="GO" id="GO:0005525">
    <property type="term" value="F:GTP binding"/>
    <property type="evidence" value="ECO:0007669"/>
    <property type="project" value="UniProtKB-KW"/>
</dbReference>
<dbReference type="GO" id="GO:0003924">
    <property type="term" value="F:GTPase activity"/>
    <property type="evidence" value="ECO:0007669"/>
    <property type="project" value="InterPro"/>
</dbReference>
<dbReference type="GO" id="GO:0003746">
    <property type="term" value="F:translation elongation factor activity"/>
    <property type="evidence" value="ECO:0007669"/>
    <property type="project" value="UniProtKB-KW"/>
</dbReference>
<dbReference type="CDD" id="cd01883">
    <property type="entry name" value="EF1_alpha"/>
    <property type="match status" value="1"/>
</dbReference>
<dbReference type="CDD" id="cd03693">
    <property type="entry name" value="EF1_alpha_II"/>
    <property type="match status" value="1"/>
</dbReference>
<dbReference type="CDD" id="cd03705">
    <property type="entry name" value="EF1_alpha_III"/>
    <property type="match status" value="1"/>
</dbReference>
<dbReference type="FunFam" id="2.40.30.10:FF:000003">
    <property type="entry name" value="Elongation factor 1-alpha"/>
    <property type="match status" value="1"/>
</dbReference>
<dbReference type="FunFam" id="2.40.30.10:FF:000005">
    <property type="entry name" value="Elongation factor 1-alpha"/>
    <property type="match status" value="1"/>
</dbReference>
<dbReference type="FunFam" id="3.40.50.300:FF:000090">
    <property type="entry name" value="Elongation factor 1-alpha"/>
    <property type="match status" value="1"/>
</dbReference>
<dbReference type="Gene3D" id="3.40.50.300">
    <property type="entry name" value="P-loop containing nucleotide triphosphate hydrolases"/>
    <property type="match status" value="1"/>
</dbReference>
<dbReference type="Gene3D" id="2.40.30.10">
    <property type="entry name" value="Translation factors"/>
    <property type="match status" value="2"/>
</dbReference>
<dbReference type="HAMAP" id="MF_00118_A">
    <property type="entry name" value="EF_Tu_A"/>
    <property type="match status" value="1"/>
</dbReference>
<dbReference type="InterPro" id="IPR004161">
    <property type="entry name" value="EFTu-like_2"/>
</dbReference>
<dbReference type="InterPro" id="IPR031157">
    <property type="entry name" value="G_TR_CS"/>
</dbReference>
<dbReference type="InterPro" id="IPR054696">
    <property type="entry name" value="GTP-eEF1A_C"/>
</dbReference>
<dbReference type="InterPro" id="IPR027417">
    <property type="entry name" value="P-loop_NTPase"/>
</dbReference>
<dbReference type="InterPro" id="IPR000795">
    <property type="entry name" value="T_Tr_GTP-bd_dom"/>
</dbReference>
<dbReference type="InterPro" id="IPR050100">
    <property type="entry name" value="TRAFAC_GTPase_members"/>
</dbReference>
<dbReference type="InterPro" id="IPR009000">
    <property type="entry name" value="Transl_B-barrel_sf"/>
</dbReference>
<dbReference type="InterPro" id="IPR009001">
    <property type="entry name" value="Transl_elong_EF1A/Init_IF2_C"/>
</dbReference>
<dbReference type="InterPro" id="IPR004539">
    <property type="entry name" value="Transl_elong_EF1A_euk/arc"/>
</dbReference>
<dbReference type="NCBIfam" id="TIGR00483">
    <property type="entry name" value="EF-1_alpha"/>
    <property type="match status" value="1"/>
</dbReference>
<dbReference type="NCBIfam" id="NF008969">
    <property type="entry name" value="PRK12317.1"/>
    <property type="match status" value="1"/>
</dbReference>
<dbReference type="PANTHER" id="PTHR23115">
    <property type="entry name" value="TRANSLATION FACTOR"/>
    <property type="match status" value="1"/>
</dbReference>
<dbReference type="Pfam" id="PF22594">
    <property type="entry name" value="GTP-eEF1A_C"/>
    <property type="match status" value="1"/>
</dbReference>
<dbReference type="Pfam" id="PF00009">
    <property type="entry name" value="GTP_EFTU"/>
    <property type="match status" value="1"/>
</dbReference>
<dbReference type="Pfam" id="PF03144">
    <property type="entry name" value="GTP_EFTU_D2"/>
    <property type="match status" value="1"/>
</dbReference>
<dbReference type="PRINTS" id="PR00315">
    <property type="entry name" value="ELONGATNFCT"/>
</dbReference>
<dbReference type="SUPFAM" id="SSF50465">
    <property type="entry name" value="EF-Tu/eEF-1alpha/eIF2-gamma C-terminal domain"/>
    <property type="match status" value="1"/>
</dbReference>
<dbReference type="SUPFAM" id="SSF52540">
    <property type="entry name" value="P-loop containing nucleoside triphosphate hydrolases"/>
    <property type="match status" value="1"/>
</dbReference>
<dbReference type="SUPFAM" id="SSF50447">
    <property type="entry name" value="Translation proteins"/>
    <property type="match status" value="1"/>
</dbReference>
<dbReference type="PROSITE" id="PS00301">
    <property type="entry name" value="G_TR_1"/>
    <property type="match status" value="1"/>
</dbReference>
<dbReference type="PROSITE" id="PS51722">
    <property type="entry name" value="G_TR_2"/>
    <property type="match status" value="1"/>
</dbReference>
<feature type="chain" id="PRO_0000090923" description="Elongation factor 1-alpha 1">
    <location>
        <begin position="1"/>
        <end position="442"/>
    </location>
</feature>
<feature type="domain" description="tr-type G">
    <location>
        <begin position="5"/>
        <end position="227"/>
    </location>
</feature>
<feature type="region of interest" description="G1" evidence="1">
    <location>
        <begin position="14"/>
        <end position="21"/>
    </location>
</feature>
<feature type="region of interest" description="G2" evidence="1">
    <location>
        <begin position="70"/>
        <end position="74"/>
    </location>
</feature>
<feature type="region of interest" description="G3" evidence="1">
    <location>
        <begin position="91"/>
        <end position="94"/>
    </location>
</feature>
<feature type="region of interest" description="G4" evidence="1">
    <location>
        <begin position="153"/>
        <end position="156"/>
    </location>
</feature>
<feature type="region of interest" description="G5" evidence="1">
    <location>
        <begin position="194"/>
        <end position="196"/>
    </location>
</feature>
<feature type="binding site" evidence="1">
    <location>
        <begin position="14"/>
        <end position="21"/>
    </location>
    <ligand>
        <name>GTP</name>
        <dbReference type="ChEBI" id="CHEBI:37565"/>
    </ligand>
</feature>
<feature type="binding site" evidence="1">
    <location>
        <begin position="91"/>
        <end position="95"/>
    </location>
    <ligand>
        <name>GTP</name>
        <dbReference type="ChEBI" id="CHEBI:37565"/>
    </ligand>
</feature>
<feature type="binding site" evidence="1">
    <location>
        <begin position="153"/>
        <end position="156"/>
    </location>
    <ligand>
        <name>GTP</name>
        <dbReference type="ChEBI" id="CHEBI:37565"/>
    </ligand>
</feature>
<proteinExistence type="inferred from homology"/>
<name>EF1A1_EUPCR</name>
<organism>
    <name type="scientific">Euplotes crassus</name>
    <dbReference type="NCBI Taxonomy" id="5936"/>
    <lineage>
        <taxon>Eukaryota</taxon>
        <taxon>Sar</taxon>
        <taxon>Alveolata</taxon>
        <taxon>Ciliophora</taxon>
        <taxon>Intramacronucleata</taxon>
        <taxon>Spirotrichea</taxon>
        <taxon>Hypotrichia</taxon>
        <taxon>Euplotida</taxon>
        <taxon>Euplotidae</taxon>
        <taxon>Moneuplotes</taxon>
    </lineage>
</organism>
<gene>
    <name type="primary">EFA1</name>
</gene>